<proteinExistence type="evidence at protein level"/>
<organism>
    <name type="scientific">Mus musculus</name>
    <name type="common">Mouse</name>
    <dbReference type="NCBI Taxonomy" id="10090"/>
    <lineage>
        <taxon>Eukaryota</taxon>
        <taxon>Metazoa</taxon>
        <taxon>Chordata</taxon>
        <taxon>Craniata</taxon>
        <taxon>Vertebrata</taxon>
        <taxon>Euteleostomi</taxon>
        <taxon>Mammalia</taxon>
        <taxon>Eutheria</taxon>
        <taxon>Euarchontoglires</taxon>
        <taxon>Glires</taxon>
        <taxon>Rodentia</taxon>
        <taxon>Myomorpha</taxon>
        <taxon>Muroidea</taxon>
        <taxon>Muridae</taxon>
        <taxon>Murinae</taxon>
        <taxon>Mus</taxon>
        <taxon>Mus</taxon>
    </lineage>
</organism>
<protein>
    <recommendedName>
        <fullName>Lysozyme C-1</fullName>
        <ecNumber>3.2.1.17</ecNumber>
    </recommendedName>
    <alternativeName>
        <fullName>1,4-beta-N-acetylmuramidase C</fullName>
    </alternativeName>
    <alternativeName>
        <fullName>Lysozyme C type P</fullName>
    </alternativeName>
</protein>
<reference key="1">
    <citation type="journal article" date="1990" name="Nucleic Acids Res.">
        <title>Recent origin of the P lysozyme gene in mice.</title>
        <authorList>
            <person name="Cortopassi G.A."/>
            <person name="Wilson A.C."/>
        </authorList>
    </citation>
    <scope>NUCLEOTIDE SEQUENCE [MRNA]</scope>
    <source>
        <strain>C57BL/6J</strain>
        <tissue>Small intestine</tissue>
    </source>
</reference>
<reference key="2">
    <citation type="journal article" date="2004" name="Genome Res.">
        <title>The status, quality, and expansion of the NIH full-length cDNA project: the Mammalian Gene Collection (MGC).</title>
        <authorList>
            <consortium name="The MGC Project Team"/>
        </authorList>
    </citation>
    <scope>NUCLEOTIDE SEQUENCE [LARGE SCALE MRNA]</scope>
    <source>
        <tissue>Heart</tissue>
        <tissue>Lung</tissue>
    </source>
</reference>
<reference key="3">
    <citation type="journal article" date="1990" name="EMBO J.">
        <title>Repetitive sequence involvement in the duplication and divergence of mouse lysozyme genes.</title>
        <authorList>
            <person name="Cross M."/>
            <person name="Renkawitz R."/>
        </authorList>
    </citation>
    <scope>NUCLEOTIDE SEQUENCE [MRNA] OF 1-45</scope>
</reference>
<reference key="4">
    <citation type="submission" date="2007-04" db="UniProtKB">
        <authorList>
            <person name="Lubec G."/>
            <person name="Kang S.U."/>
        </authorList>
    </citation>
    <scope>PROTEIN SEQUENCE OF 69-80</scope>
    <scope>IDENTIFICATION BY MASS SPECTROMETRY</scope>
    <source>
        <strain>C57BL/6J</strain>
        <tissue>Brain</tissue>
    </source>
</reference>
<reference key="5">
    <citation type="journal article" date="2004" name="Biochem. J.">
        <title>Comparison of the microbicidal and muramidase activities of mouse lysozyme M and P.</title>
        <authorList>
            <person name="Markart P."/>
            <person name="Faust N."/>
            <person name="Graf T."/>
            <person name="Na C.-L."/>
            <person name="Weaver T.E."/>
            <person name="Akinbi H.T."/>
        </authorList>
    </citation>
    <scope>FUNCTION</scope>
</reference>
<keyword id="KW-0929">Antimicrobial</keyword>
<keyword id="KW-0081">Bacteriolytic enzyme</keyword>
<keyword id="KW-0903">Direct protein sequencing</keyword>
<keyword id="KW-1015">Disulfide bond</keyword>
<keyword id="KW-0326">Glycosidase</keyword>
<keyword id="KW-0378">Hydrolase</keyword>
<keyword id="KW-1185">Reference proteome</keyword>
<keyword id="KW-0964">Secreted</keyword>
<keyword id="KW-0732">Signal</keyword>
<feature type="signal peptide" evidence="1">
    <location>
        <begin position="1"/>
        <end position="18"/>
    </location>
</feature>
<feature type="chain" id="PRO_0000018473" description="Lysozyme C-1">
    <location>
        <begin position="19"/>
        <end position="148"/>
    </location>
</feature>
<feature type="domain" description="C-type lysozyme" evidence="2">
    <location>
        <begin position="19"/>
        <end position="148"/>
    </location>
</feature>
<feature type="active site" evidence="2">
    <location>
        <position position="53"/>
    </location>
</feature>
<feature type="active site" evidence="2">
    <location>
        <position position="71"/>
    </location>
</feature>
<feature type="disulfide bond" evidence="2">
    <location>
        <begin position="24"/>
        <end position="146"/>
    </location>
</feature>
<feature type="disulfide bond" evidence="2">
    <location>
        <begin position="48"/>
        <end position="134"/>
    </location>
</feature>
<feature type="disulfide bond" evidence="2">
    <location>
        <begin position="83"/>
        <end position="99"/>
    </location>
</feature>
<feature type="disulfide bond" evidence="2">
    <location>
        <begin position="95"/>
        <end position="113"/>
    </location>
</feature>
<dbReference type="EC" id="3.2.1.17"/>
<dbReference type="EMBL" id="X51547">
    <property type="protein sequence ID" value="CAA35922.1"/>
    <property type="molecule type" value="mRNA"/>
</dbReference>
<dbReference type="EMBL" id="BC061129">
    <property type="protein sequence ID" value="AAH61129.1"/>
    <property type="molecule type" value="mRNA"/>
</dbReference>
<dbReference type="CCDS" id="CCDS48695.1"/>
<dbReference type="PIR" id="S09229">
    <property type="entry name" value="S09229"/>
</dbReference>
<dbReference type="RefSeq" id="NP_038618.1">
    <property type="nucleotide sequence ID" value="NM_013590.4"/>
</dbReference>
<dbReference type="SMR" id="P17897"/>
<dbReference type="BioGRID" id="201260">
    <property type="interactions" value="10"/>
</dbReference>
<dbReference type="FunCoup" id="P17897">
    <property type="interactions" value="90"/>
</dbReference>
<dbReference type="IntAct" id="P17897">
    <property type="interactions" value="1"/>
</dbReference>
<dbReference type="MINT" id="P17897"/>
<dbReference type="STRING" id="10090.ENSMUSP00000089800"/>
<dbReference type="CAZy" id="GH22">
    <property type="family name" value="Glycoside Hydrolase Family 22"/>
</dbReference>
<dbReference type="PhosphoSitePlus" id="P17897"/>
<dbReference type="jPOST" id="P17897"/>
<dbReference type="PaxDb" id="10090-ENSMUSP00000089800"/>
<dbReference type="PeptideAtlas" id="P17897"/>
<dbReference type="ProteomicsDB" id="292134"/>
<dbReference type="Pumba" id="P17897"/>
<dbReference type="DNASU" id="17110"/>
<dbReference type="Ensembl" id="ENSMUST00000092162.7">
    <property type="protein sequence ID" value="ENSMUSP00000089800.6"/>
    <property type="gene ID" value="ENSMUSG00000069515.7"/>
</dbReference>
<dbReference type="GeneID" id="17110"/>
<dbReference type="KEGG" id="mmu:17110"/>
<dbReference type="UCSC" id="uc007hdc.2">
    <property type="organism name" value="mouse"/>
</dbReference>
<dbReference type="AGR" id="MGI:96902"/>
<dbReference type="CTD" id="17110"/>
<dbReference type="MGI" id="MGI:96902">
    <property type="gene designation" value="Lyz1"/>
</dbReference>
<dbReference type="VEuPathDB" id="HostDB:ENSMUSG00000069515"/>
<dbReference type="eggNOG" id="ENOG502S1S1">
    <property type="taxonomic scope" value="Eukaryota"/>
</dbReference>
<dbReference type="GeneTree" id="ENSGT00940000153832"/>
<dbReference type="HOGENOM" id="CLU_111620_0_1_1"/>
<dbReference type="InParanoid" id="P17897"/>
<dbReference type="OMA" id="YNTLAKY"/>
<dbReference type="OrthoDB" id="17373at2759"/>
<dbReference type="PhylomeDB" id="P17897"/>
<dbReference type="TreeFam" id="TF324882"/>
<dbReference type="BioGRID-ORCS" id="17110">
    <property type="hits" value="0 hits in 79 CRISPR screens"/>
</dbReference>
<dbReference type="PRO" id="PR:P17897"/>
<dbReference type="Proteomes" id="UP000000589">
    <property type="component" value="Chromosome 10"/>
</dbReference>
<dbReference type="RNAct" id="P17897">
    <property type="molecule type" value="protein"/>
</dbReference>
<dbReference type="Bgee" id="ENSMUSG00000069515">
    <property type="expression patterns" value="Expressed in ileum and 39 other cell types or tissues"/>
</dbReference>
<dbReference type="ExpressionAtlas" id="P17897">
    <property type="expression patterns" value="baseline and differential"/>
</dbReference>
<dbReference type="GO" id="GO:0005576">
    <property type="term" value="C:extracellular region"/>
    <property type="evidence" value="ECO:0007669"/>
    <property type="project" value="UniProtKB-SubCell"/>
</dbReference>
<dbReference type="GO" id="GO:0003796">
    <property type="term" value="F:lysozyme activity"/>
    <property type="evidence" value="ECO:0007669"/>
    <property type="project" value="UniProtKB-EC"/>
</dbReference>
<dbReference type="GO" id="GO:0050829">
    <property type="term" value="P:defense response to Gram-negative bacterium"/>
    <property type="evidence" value="ECO:0000314"/>
    <property type="project" value="UniProtKB"/>
</dbReference>
<dbReference type="GO" id="GO:0050830">
    <property type="term" value="P:defense response to Gram-positive bacterium"/>
    <property type="evidence" value="ECO:0000314"/>
    <property type="project" value="UniProtKB"/>
</dbReference>
<dbReference type="GO" id="GO:0031640">
    <property type="term" value="P:killing of cells of another organism"/>
    <property type="evidence" value="ECO:0007669"/>
    <property type="project" value="UniProtKB-KW"/>
</dbReference>
<dbReference type="CDD" id="cd16897">
    <property type="entry name" value="LYZ_C"/>
    <property type="match status" value="1"/>
</dbReference>
<dbReference type="FunFam" id="1.10.530.10:FF:000001">
    <property type="entry name" value="Lysozyme C"/>
    <property type="match status" value="1"/>
</dbReference>
<dbReference type="Gene3D" id="1.10.530.10">
    <property type="match status" value="1"/>
</dbReference>
<dbReference type="InterPro" id="IPR001916">
    <property type="entry name" value="Glyco_hydro_22"/>
</dbReference>
<dbReference type="InterPro" id="IPR019799">
    <property type="entry name" value="Glyco_hydro_22_CS"/>
</dbReference>
<dbReference type="InterPro" id="IPR000974">
    <property type="entry name" value="Glyco_hydro_22_lys"/>
</dbReference>
<dbReference type="InterPro" id="IPR023346">
    <property type="entry name" value="Lysozyme-like_dom_sf"/>
</dbReference>
<dbReference type="PANTHER" id="PTHR11407">
    <property type="entry name" value="LYSOZYME C"/>
    <property type="match status" value="1"/>
</dbReference>
<dbReference type="PANTHER" id="PTHR11407:SF28">
    <property type="entry name" value="LYSOZYME C"/>
    <property type="match status" value="1"/>
</dbReference>
<dbReference type="Pfam" id="PF00062">
    <property type="entry name" value="Lys"/>
    <property type="match status" value="1"/>
</dbReference>
<dbReference type="PRINTS" id="PR00137">
    <property type="entry name" value="LYSOZYME"/>
</dbReference>
<dbReference type="PRINTS" id="PR00135">
    <property type="entry name" value="LYZLACT"/>
</dbReference>
<dbReference type="SMART" id="SM00263">
    <property type="entry name" value="LYZ1"/>
    <property type="match status" value="1"/>
</dbReference>
<dbReference type="SUPFAM" id="SSF53955">
    <property type="entry name" value="Lysozyme-like"/>
    <property type="match status" value="1"/>
</dbReference>
<dbReference type="PROSITE" id="PS00128">
    <property type="entry name" value="GLYCOSYL_HYDROL_F22_1"/>
    <property type="match status" value="1"/>
</dbReference>
<dbReference type="PROSITE" id="PS51348">
    <property type="entry name" value="GLYCOSYL_HYDROL_F22_2"/>
    <property type="match status" value="1"/>
</dbReference>
<sequence length="148" mass="16794">MKALLTLGLLLLSVTAQAKVYNRCELARILKRNGMDGYRGVKLADWVCLAQHESNYNTRATNYNRGDRSTDYGIFQINSRYWCNDGKTPRSKNACGINCSALLQDDITAAIQCAKRVVRDPQGIRAWVAWRTQCQNRDLSQYIRNCGV</sequence>
<name>LYZ1_MOUSE</name>
<accession>P17897</accession>
<evidence type="ECO:0000250" key="1"/>
<evidence type="ECO:0000255" key="2">
    <source>
        <dbReference type="PROSITE-ProRule" id="PRU00680"/>
    </source>
</evidence>
<evidence type="ECO:0000269" key="3">
    <source>
    </source>
</evidence>
<comment type="function">
    <text evidence="2 3">Lysozymes have primarily a bacteriolytic function; those in tissues and body fluids are associated with the monocyte-macrophage system and enhance the activity of immunoagents. Lyz1 is active against a range of Gram-positive and Gram-negative bacteria. Less effective than Lyz2 in killing Gram-negative bacteria. Lyz1 and Lyz2 are equally effective in killing Gram-positive bacteria.</text>
</comment>
<comment type="catalytic activity">
    <reaction>
        <text>Hydrolysis of (1-&gt;4)-beta-linkages between N-acetylmuramic acid and N-acetyl-D-glucosamine residues in a peptidoglycan and between N-acetyl-D-glucosamine residues in chitodextrins.</text>
        <dbReference type="EC" id="3.2.1.17"/>
    </reaction>
</comment>
<comment type="subunit">
    <text>Monomer.</text>
</comment>
<comment type="subcellular location">
    <subcellularLocation>
        <location>Secreted</location>
    </subcellularLocation>
</comment>
<comment type="tissue specificity">
    <text>Expressed strongly only in small intestine.</text>
</comment>
<comment type="miscellaneous">
    <text>Lysozyme C is capable of both hydrolysis and transglycosylation; it also shows a slight esterase activity. It acts rapidly on both peptide-substituted and unsubstituted peptidoglycan, and slowly on chitin oligosaccharides.</text>
</comment>
<comment type="similarity">
    <text evidence="2">Belongs to the glycosyl hydrolase 22 family.</text>
</comment>
<gene>
    <name type="primary">Lyz1</name>
    <name type="synonym">Lzp-s</name>
</gene>